<keyword id="KW-0964">Secreted</keyword>
<keyword id="KW-0843">Virulence</keyword>
<dbReference type="EMBL" id="CP000046">
    <property type="protein sequence ID" value="AAW38831.1"/>
    <property type="molecule type" value="Genomic_DNA"/>
</dbReference>
<dbReference type="RefSeq" id="WP_001010289.1">
    <property type="nucleotide sequence ID" value="NZ_JBGOFO010000001.1"/>
</dbReference>
<dbReference type="SMR" id="Q5HJ85"/>
<dbReference type="GeneID" id="66838591"/>
<dbReference type="KEGG" id="sac:SACOL0277"/>
<dbReference type="HOGENOM" id="CLU_1936813_0_0_9"/>
<dbReference type="Proteomes" id="UP000000530">
    <property type="component" value="Chromosome"/>
</dbReference>
<dbReference type="GO" id="GO:0005576">
    <property type="term" value="C:extracellular region"/>
    <property type="evidence" value="ECO:0007669"/>
    <property type="project" value="UniProtKB-SubCell"/>
</dbReference>
<accession>Q5HJ85</accession>
<comment type="subcellular location">
    <subcellularLocation>
        <location evidence="2">Secreted</location>
    </subcellularLocation>
    <text evidence="2">Secreted via the ESAT-6 secretion system (Ess) / type VII secretion system (T7SS).</text>
</comment>
<comment type="similarity">
    <text evidence="3">Belongs to the EsxC family.</text>
</comment>
<protein>
    <recommendedName>
        <fullName evidence="2">ESAT-6 secretion system extracellular protein C</fullName>
        <shortName evidence="2">Ess extracellular protein C</shortName>
    </recommendedName>
</protein>
<sequence length="130" mass="14937">MNFNDIETMVKSKFKDIKKHAEEIAHEIEVRSGYLRKAEQYKRLEFNLSFALDDIESTAKDVQTAKSSANKDSVTVKGKAPNTLYIEKRNLMKQKLEMLGEDIDKNKESLQKAKEIAGEKASEYFNKAMN</sequence>
<organism>
    <name type="scientific">Staphylococcus aureus (strain COL)</name>
    <dbReference type="NCBI Taxonomy" id="93062"/>
    <lineage>
        <taxon>Bacteria</taxon>
        <taxon>Bacillati</taxon>
        <taxon>Bacillota</taxon>
        <taxon>Bacilli</taxon>
        <taxon>Bacillales</taxon>
        <taxon>Staphylococcaceae</taxon>
        <taxon>Staphylococcus</taxon>
    </lineage>
</organism>
<name>ESXC_STAAC</name>
<evidence type="ECO:0000250" key="1">
    <source>
        <dbReference type="UniProtKB" id="A0A0H2XIK2"/>
    </source>
</evidence>
<evidence type="ECO:0000250" key="2">
    <source>
        <dbReference type="UniProtKB" id="P0C051"/>
    </source>
</evidence>
<evidence type="ECO:0000305" key="3"/>
<feature type="chain" id="PRO_0000087050" description="ESAT-6 secretion system extracellular protein C">
    <location>
        <begin position="1"/>
        <end position="130"/>
    </location>
</feature>
<reference key="1">
    <citation type="journal article" date="2005" name="J. Bacteriol.">
        <title>Insights on evolution of virulence and resistance from the complete genome analysis of an early methicillin-resistant Staphylococcus aureus strain and a biofilm-producing methicillin-resistant Staphylococcus epidermidis strain.</title>
        <authorList>
            <person name="Gill S.R."/>
            <person name="Fouts D.E."/>
            <person name="Archer G.L."/>
            <person name="Mongodin E.F."/>
            <person name="DeBoy R.T."/>
            <person name="Ravel J."/>
            <person name="Paulsen I.T."/>
            <person name="Kolonay J.F."/>
            <person name="Brinkac L.M."/>
            <person name="Beanan M.J."/>
            <person name="Dodson R.J."/>
            <person name="Daugherty S.C."/>
            <person name="Madupu R."/>
            <person name="Angiuoli S.V."/>
            <person name="Durkin A.S."/>
            <person name="Haft D.H."/>
            <person name="Vamathevan J.J."/>
            <person name="Khouri H."/>
            <person name="Utterback T.R."/>
            <person name="Lee C."/>
            <person name="Dimitrov G."/>
            <person name="Jiang L."/>
            <person name="Qin H."/>
            <person name="Weidman J."/>
            <person name="Tran K."/>
            <person name="Kang K.H."/>
            <person name="Hance I.R."/>
            <person name="Nelson K.E."/>
            <person name="Fraser C.M."/>
        </authorList>
    </citation>
    <scope>NUCLEOTIDE SEQUENCE [LARGE SCALE GENOMIC DNA]</scope>
    <source>
        <strain>COL</strain>
    </source>
</reference>
<proteinExistence type="inferred from homology"/>
<gene>
    <name evidence="1" type="primary">esxC</name>
    <name evidence="2" type="synonym">esaC</name>
    <name type="ordered locus">SACOL0277</name>
</gene>